<dbReference type="EC" id="2.4.1.-"/>
<dbReference type="EMBL" id="AL161667">
    <property type="protein sequence ID" value="CAB81596.1"/>
    <property type="molecule type" value="Genomic_DNA"/>
</dbReference>
<dbReference type="EMBL" id="CP002686">
    <property type="protein sequence ID" value="AEE79425.1"/>
    <property type="molecule type" value="Genomic_DNA"/>
</dbReference>
<dbReference type="PIR" id="T47710">
    <property type="entry name" value="T47710"/>
</dbReference>
<dbReference type="RefSeq" id="NP_191130.1">
    <property type="nucleotide sequence ID" value="NM_115429.3"/>
</dbReference>
<dbReference type="SMR" id="Q9M051"/>
<dbReference type="FunCoup" id="Q9M051">
    <property type="interactions" value="178"/>
</dbReference>
<dbReference type="STRING" id="3702.Q9M051"/>
<dbReference type="CAZy" id="GT1">
    <property type="family name" value="Glycosyltransferase Family 1"/>
</dbReference>
<dbReference type="PaxDb" id="3702-AT3G55710.1"/>
<dbReference type="ProteomicsDB" id="228625"/>
<dbReference type="EnsemblPlants" id="AT3G55710.1">
    <property type="protein sequence ID" value="AT3G55710.1"/>
    <property type="gene ID" value="AT3G55710"/>
</dbReference>
<dbReference type="GeneID" id="824737"/>
<dbReference type="Gramene" id="AT3G55710.1">
    <property type="protein sequence ID" value="AT3G55710.1"/>
    <property type="gene ID" value="AT3G55710"/>
</dbReference>
<dbReference type="KEGG" id="ath:AT3G55710"/>
<dbReference type="Araport" id="AT3G55710"/>
<dbReference type="TAIR" id="AT3G55710"/>
<dbReference type="eggNOG" id="KOG1192">
    <property type="taxonomic scope" value="Eukaryota"/>
</dbReference>
<dbReference type="HOGENOM" id="CLU_001724_0_0_1"/>
<dbReference type="InParanoid" id="Q9M051"/>
<dbReference type="OMA" id="IDWAPQD"/>
<dbReference type="PhylomeDB" id="Q9M051"/>
<dbReference type="BioCyc" id="ARA:AT3G55710-MONOMER"/>
<dbReference type="PRO" id="PR:Q9M051"/>
<dbReference type="Proteomes" id="UP000006548">
    <property type="component" value="Chromosome 3"/>
</dbReference>
<dbReference type="ExpressionAtlas" id="Q9M051">
    <property type="expression patterns" value="baseline and differential"/>
</dbReference>
<dbReference type="GO" id="GO:0008194">
    <property type="term" value="F:UDP-glycosyltransferase activity"/>
    <property type="evidence" value="ECO:0007669"/>
    <property type="project" value="InterPro"/>
</dbReference>
<dbReference type="CDD" id="cd03784">
    <property type="entry name" value="GT1_Gtf-like"/>
    <property type="match status" value="1"/>
</dbReference>
<dbReference type="FunFam" id="3.40.50.2000:FF:000040">
    <property type="entry name" value="UDP-glycosyltransferase 76C1"/>
    <property type="match status" value="1"/>
</dbReference>
<dbReference type="FunFam" id="3.40.50.2000:FF:000120">
    <property type="entry name" value="UDP-glycosyltransferase 76C1"/>
    <property type="match status" value="1"/>
</dbReference>
<dbReference type="Gene3D" id="3.40.50.2000">
    <property type="entry name" value="Glycogen Phosphorylase B"/>
    <property type="match status" value="2"/>
</dbReference>
<dbReference type="InterPro" id="IPR002213">
    <property type="entry name" value="UDP_glucos_trans"/>
</dbReference>
<dbReference type="PANTHER" id="PTHR11926">
    <property type="entry name" value="GLUCOSYL/GLUCURONOSYL TRANSFERASES"/>
    <property type="match status" value="1"/>
</dbReference>
<dbReference type="PANTHER" id="PTHR11926:SF1374">
    <property type="entry name" value="UDP-GLYCOSYLTRANSFERASE 76F1-RELATED"/>
    <property type="match status" value="1"/>
</dbReference>
<dbReference type="Pfam" id="PF00201">
    <property type="entry name" value="UDPGT"/>
    <property type="match status" value="1"/>
</dbReference>
<dbReference type="SUPFAM" id="SSF53756">
    <property type="entry name" value="UDP-Glycosyltransferase/glycogen phosphorylase"/>
    <property type="match status" value="1"/>
</dbReference>
<reference key="1">
    <citation type="journal article" date="2000" name="Nature">
        <title>Sequence and analysis of chromosome 3 of the plant Arabidopsis thaliana.</title>
        <authorList>
            <person name="Salanoubat M."/>
            <person name="Lemcke K."/>
            <person name="Rieger M."/>
            <person name="Ansorge W."/>
            <person name="Unseld M."/>
            <person name="Fartmann B."/>
            <person name="Valle G."/>
            <person name="Bloecker H."/>
            <person name="Perez-Alonso M."/>
            <person name="Obermaier B."/>
            <person name="Delseny M."/>
            <person name="Boutry M."/>
            <person name="Grivell L.A."/>
            <person name="Mache R."/>
            <person name="Puigdomenech P."/>
            <person name="De Simone V."/>
            <person name="Choisne N."/>
            <person name="Artiguenave F."/>
            <person name="Robert C."/>
            <person name="Brottier P."/>
            <person name="Wincker P."/>
            <person name="Cattolico L."/>
            <person name="Weissenbach J."/>
            <person name="Saurin W."/>
            <person name="Quetier F."/>
            <person name="Schaefer M."/>
            <person name="Mueller-Auer S."/>
            <person name="Gabel C."/>
            <person name="Fuchs M."/>
            <person name="Benes V."/>
            <person name="Wurmbach E."/>
            <person name="Drzonek H."/>
            <person name="Erfle H."/>
            <person name="Jordan N."/>
            <person name="Bangert S."/>
            <person name="Wiedelmann R."/>
            <person name="Kranz H."/>
            <person name="Voss H."/>
            <person name="Holland R."/>
            <person name="Brandt P."/>
            <person name="Nyakatura G."/>
            <person name="Vezzi A."/>
            <person name="D'Angelo M."/>
            <person name="Pallavicini A."/>
            <person name="Toppo S."/>
            <person name="Simionati B."/>
            <person name="Conrad A."/>
            <person name="Hornischer K."/>
            <person name="Kauer G."/>
            <person name="Loehnert T.-H."/>
            <person name="Nordsiek G."/>
            <person name="Reichelt J."/>
            <person name="Scharfe M."/>
            <person name="Schoen O."/>
            <person name="Bargues M."/>
            <person name="Terol J."/>
            <person name="Climent J."/>
            <person name="Navarro P."/>
            <person name="Collado C."/>
            <person name="Perez-Perez A."/>
            <person name="Ottenwaelder B."/>
            <person name="Duchemin D."/>
            <person name="Cooke R."/>
            <person name="Laudie M."/>
            <person name="Berger-Llauro C."/>
            <person name="Purnelle B."/>
            <person name="Masuy D."/>
            <person name="de Haan M."/>
            <person name="Maarse A.C."/>
            <person name="Alcaraz J.-P."/>
            <person name="Cottet A."/>
            <person name="Casacuberta E."/>
            <person name="Monfort A."/>
            <person name="Argiriou A."/>
            <person name="Flores M."/>
            <person name="Liguori R."/>
            <person name="Vitale D."/>
            <person name="Mannhaupt G."/>
            <person name="Haase D."/>
            <person name="Schoof H."/>
            <person name="Rudd S."/>
            <person name="Zaccaria P."/>
            <person name="Mewes H.-W."/>
            <person name="Mayer K.F.X."/>
            <person name="Kaul S."/>
            <person name="Town C.D."/>
            <person name="Koo H.L."/>
            <person name="Tallon L.J."/>
            <person name="Jenkins J."/>
            <person name="Rooney T."/>
            <person name="Rizzo M."/>
            <person name="Walts A."/>
            <person name="Utterback T."/>
            <person name="Fujii C.Y."/>
            <person name="Shea T.P."/>
            <person name="Creasy T.H."/>
            <person name="Haas B."/>
            <person name="Maiti R."/>
            <person name="Wu D."/>
            <person name="Peterson J."/>
            <person name="Van Aken S."/>
            <person name="Pai G."/>
            <person name="Militscher J."/>
            <person name="Sellers P."/>
            <person name="Gill J.E."/>
            <person name="Feldblyum T.V."/>
            <person name="Preuss D."/>
            <person name="Lin X."/>
            <person name="Nierman W.C."/>
            <person name="Salzberg S.L."/>
            <person name="White O."/>
            <person name="Venter J.C."/>
            <person name="Fraser C.M."/>
            <person name="Kaneko T."/>
            <person name="Nakamura Y."/>
            <person name="Sato S."/>
            <person name="Kato T."/>
            <person name="Asamizu E."/>
            <person name="Sasamoto S."/>
            <person name="Kimura T."/>
            <person name="Idesawa K."/>
            <person name="Kawashima K."/>
            <person name="Kishida Y."/>
            <person name="Kiyokawa C."/>
            <person name="Kohara M."/>
            <person name="Matsumoto M."/>
            <person name="Matsuno A."/>
            <person name="Muraki A."/>
            <person name="Nakayama S."/>
            <person name="Nakazaki N."/>
            <person name="Shinpo S."/>
            <person name="Takeuchi C."/>
            <person name="Wada T."/>
            <person name="Watanabe A."/>
            <person name="Yamada M."/>
            <person name="Yasuda M."/>
            <person name="Tabata S."/>
        </authorList>
    </citation>
    <scope>NUCLEOTIDE SEQUENCE [LARGE SCALE GENOMIC DNA]</scope>
    <source>
        <strain>cv. Columbia</strain>
    </source>
</reference>
<reference key="2">
    <citation type="journal article" date="2017" name="Plant J.">
        <title>Araport11: a complete reannotation of the Arabidopsis thaliana reference genome.</title>
        <authorList>
            <person name="Cheng C.Y."/>
            <person name="Krishnakumar V."/>
            <person name="Chan A.P."/>
            <person name="Thibaud-Nissen F."/>
            <person name="Schobel S."/>
            <person name="Town C.D."/>
        </authorList>
    </citation>
    <scope>GENOME REANNOTATION</scope>
    <source>
        <strain>cv. Columbia</strain>
    </source>
</reference>
<reference key="3">
    <citation type="journal article" date="2001" name="J. Biol. Chem.">
        <title>Phylogenetic analysis of the UDP-glycosyltransferase multigene family of Arabidopsis thaliana.</title>
        <authorList>
            <person name="Li Y."/>
            <person name="Baldauf S."/>
            <person name="Lim E.K."/>
            <person name="Bowles D.J."/>
        </authorList>
    </citation>
    <scope>GENE FAMILY</scope>
</reference>
<organism>
    <name type="scientific">Arabidopsis thaliana</name>
    <name type="common">Mouse-ear cress</name>
    <dbReference type="NCBI Taxonomy" id="3702"/>
    <lineage>
        <taxon>Eukaryota</taxon>
        <taxon>Viridiplantae</taxon>
        <taxon>Streptophyta</taxon>
        <taxon>Embryophyta</taxon>
        <taxon>Tracheophyta</taxon>
        <taxon>Spermatophyta</taxon>
        <taxon>Magnoliopsida</taxon>
        <taxon>eudicotyledons</taxon>
        <taxon>Gunneridae</taxon>
        <taxon>Pentapetalae</taxon>
        <taxon>rosids</taxon>
        <taxon>malvids</taxon>
        <taxon>Brassicales</taxon>
        <taxon>Brassicaceae</taxon>
        <taxon>Camelineae</taxon>
        <taxon>Arabidopsis</taxon>
    </lineage>
</organism>
<sequence>MEERKVKRIIMFPLPFTGHFNPMIELAGIFHNRGFSVTILHTSFNFPDPSRHPQFTFRTITHKNEGEEDPLSQSETSSGKDLVVLISLLKQYYTEPSLAEEVGEGGTVCCLVSDALWGRNTEIVAKEIGVCTMVMRTSGAATFCAYTAFPLLIDKGYLPIQGSRLDELVTELPPLKVKDLPVIKTKEPEGLNRILNDMVEGAKLSSGVVWNTFEDLERHSLMDCRSKLQVPLFPIGPFHKHRTDLPPKPKNKDKDDDEILTDWLNKQAPQSVVYVSFGSLAAIEENEFFEIAWGLRNSELPFLWVVRPGMVRGTEWLESLPCGFLENIGHQGKIVKWVNQLETLAHPAVGAFWTHCGWNSTIESICEGVPMICTPCFSDQHVNARYIVDVWRVGMMLERCKMERTEIEKVVTSVMMENGAGLTEMCLELKEKANVCLSEDGSSSKYLDKLVSHVLSFDSSAFAS</sequence>
<gene>
    <name type="primary">UGT76F2</name>
    <name type="ordered locus">At3g55710</name>
    <name type="ORF">F1I16.120</name>
</gene>
<evidence type="ECO:0000250" key="1"/>
<evidence type="ECO:0000305" key="2"/>
<feature type="chain" id="PRO_0000409097" description="UDP-glycosyltransferase 76F2">
    <location>
        <begin position="1"/>
        <end position="464"/>
    </location>
</feature>
<feature type="binding site" evidence="1">
    <location>
        <position position="279"/>
    </location>
    <ligand>
        <name>UDP-alpha-D-glucose</name>
        <dbReference type="ChEBI" id="CHEBI:58885"/>
    </ligand>
</feature>
<feature type="binding site" evidence="1">
    <location>
        <begin position="338"/>
        <end position="340"/>
    </location>
    <ligand>
        <name>UDP-alpha-D-glucose</name>
        <dbReference type="ChEBI" id="CHEBI:58885"/>
    </ligand>
</feature>
<feature type="binding site" evidence="1">
    <location>
        <begin position="355"/>
        <end position="363"/>
    </location>
    <ligand>
        <name>UDP-alpha-D-glucose</name>
        <dbReference type="ChEBI" id="CHEBI:58885"/>
    </ligand>
</feature>
<feature type="binding site" evidence="1">
    <location>
        <begin position="377"/>
        <end position="380"/>
    </location>
    <ligand>
        <name>UDP-alpha-D-glucose</name>
        <dbReference type="ChEBI" id="CHEBI:58885"/>
    </ligand>
</feature>
<proteinExistence type="evidence at transcript level"/>
<accession>Q9M051</accession>
<comment type="similarity">
    <text evidence="2">Belongs to the UDP-glycosyltransferase family.</text>
</comment>
<protein>
    <recommendedName>
        <fullName>UDP-glycosyltransferase 76F2</fullName>
        <ecNumber>2.4.1.-</ecNumber>
    </recommendedName>
</protein>
<name>U76F2_ARATH</name>
<keyword id="KW-0328">Glycosyltransferase</keyword>
<keyword id="KW-1185">Reference proteome</keyword>
<keyword id="KW-0808">Transferase</keyword>